<keyword id="KW-0143">Chaperone</keyword>
<keyword id="KW-0574">Periplasm</keyword>
<keyword id="KW-0653">Protein transport</keyword>
<keyword id="KW-0732">Signal</keyword>
<keyword id="KW-0813">Transport</keyword>
<dbReference type="EMBL" id="CP000305">
    <property type="protein sequence ID" value="ABG18931.1"/>
    <property type="molecule type" value="Genomic_DNA"/>
</dbReference>
<dbReference type="EMBL" id="ACNQ01000017">
    <property type="protein sequence ID" value="EEO75046.1"/>
    <property type="molecule type" value="Genomic_DNA"/>
</dbReference>
<dbReference type="RefSeq" id="WP_002211338.1">
    <property type="nucleotide sequence ID" value="NZ_ACNQ01000017.1"/>
</dbReference>
<dbReference type="SMR" id="Q1CGE9"/>
<dbReference type="GeneID" id="57977173"/>
<dbReference type="KEGG" id="ypn:YPN_2603"/>
<dbReference type="HOGENOM" id="CLU_087560_1_1_6"/>
<dbReference type="Proteomes" id="UP000008936">
    <property type="component" value="Chromosome"/>
</dbReference>
<dbReference type="GO" id="GO:0030288">
    <property type="term" value="C:outer membrane-bounded periplasmic space"/>
    <property type="evidence" value="ECO:0007669"/>
    <property type="project" value="TreeGrafter"/>
</dbReference>
<dbReference type="GO" id="GO:0044874">
    <property type="term" value="P:lipoprotein localization to outer membrane"/>
    <property type="evidence" value="ECO:0007669"/>
    <property type="project" value="UniProtKB-UniRule"/>
</dbReference>
<dbReference type="GO" id="GO:0042953">
    <property type="term" value="P:lipoprotein transport"/>
    <property type="evidence" value="ECO:0007669"/>
    <property type="project" value="InterPro"/>
</dbReference>
<dbReference type="CDD" id="cd16325">
    <property type="entry name" value="LolA"/>
    <property type="match status" value="1"/>
</dbReference>
<dbReference type="FunFam" id="2.50.20.10:FF:000001">
    <property type="entry name" value="Outer-membrane lipoprotein carrier protein"/>
    <property type="match status" value="1"/>
</dbReference>
<dbReference type="Gene3D" id="2.50.20.10">
    <property type="entry name" value="Lipoprotein localisation LolA/LolB/LppX"/>
    <property type="match status" value="1"/>
</dbReference>
<dbReference type="HAMAP" id="MF_00240">
    <property type="entry name" value="LolA"/>
    <property type="match status" value="1"/>
</dbReference>
<dbReference type="InterPro" id="IPR029046">
    <property type="entry name" value="LolA/LolB/LppX"/>
</dbReference>
<dbReference type="InterPro" id="IPR004564">
    <property type="entry name" value="OM_lipoprot_carrier_LolA-like"/>
</dbReference>
<dbReference type="InterPro" id="IPR018323">
    <property type="entry name" value="OM_lipoprot_carrier_LolA_Pbac"/>
</dbReference>
<dbReference type="NCBIfam" id="TIGR00547">
    <property type="entry name" value="lolA"/>
    <property type="match status" value="1"/>
</dbReference>
<dbReference type="PANTHER" id="PTHR35869">
    <property type="entry name" value="OUTER-MEMBRANE LIPOPROTEIN CARRIER PROTEIN"/>
    <property type="match status" value="1"/>
</dbReference>
<dbReference type="PANTHER" id="PTHR35869:SF1">
    <property type="entry name" value="OUTER-MEMBRANE LIPOPROTEIN CARRIER PROTEIN"/>
    <property type="match status" value="1"/>
</dbReference>
<dbReference type="Pfam" id="PF03548">
    <property type="entry name" value="LolA"/>
    <property type="match status" value="1"/>
</dbReference>
<dbReference type="SUPFAM" id="SSF89392">
    <property type="entry name" value="Prokaryotic lipoproteins and lipoprotein localization factors"/>
    <property type="match status" value="1"/>
</dbReference>
<name>LOLA_YERPN</name>
<comment type="function">
    <text evidence="1">Participates in the translocation of lipoproteins from the inner membrane to the outer membrane. Only forms a complex with a lipoprotein if the residue after the N-terminal Cys is not an aspartate (The Asp acts as a targeting signal to indicate that the lipoprotein should stay in the inner membrane).</text>
</comment>
<comment type="subunit">
    <text evidence="1">Monomer.</text>
</comment>
<comment type="subcellular location">
    <subcellularLocation>
        <location evidence="1">Periplasm</location>
    </subcellularLocation>
</comment>
<comment type="similarity">
    <text evidence="1">Belongs to the LolA family.</text>
</comment>
<protein>
    <recommendedName>
        <fullName evidence="1">Outer-membrane lipoprotein carrier protein</fullName>
    </recommendedName>
</protein>
<organism>
    <name type="scientific">Yersinia pestis bv. Antiqua (strain Nepal516)</name>
    <dbReference type="NCBI Taxonomy" id="377628"/>
    <lineage>
        <taxon>Bacteria</taxon>
        <taxon>Pseudomonadati</taxon>
        <taxon>Pseudomonadota</taxon>
        <taxon>Gammaproteobacteria</taxon>
        <taxon>Enterobacterales</taxon>
        <taxon>Yersiniaceae</taxon>
        <taxon>Yersinia</taxon>
    </lineage>
</organism>
<sequence>MKRLLVACCFLSGLISASALADASTDLQNRLSKVNSFHASFSQAVTSSDGAVVQEGEGELWVKRPNLFNWHMTSPDESVLISDGETLWFYNPFVEQATATWLKNATGNTPFMLITRNNPDDWKQYNVKQKGDDFELTPKSASGNLKQFAISVTPSGTIKSFTAVEQDGQRSAYTLKSQQSSVVDASKFTFTPPKGVTLDDQR</sequence>
<gene>
    <name evidence="1" type="primary">lolA</name>
    <name type="ordered locus">YPN_2603</name>
    <name type="ORF">YP516_2931</name>
</gene>
<proteinExistence type="inferred from homology"/>
<evidence type="ECO:0000255" key="1">
    <source>
        <dbReference type="HAMAP-Rule" id="MF_00240"/>
    </source>
</evidence>
<feature type="signal peptide" evidence="1">
    <location>
        <begin position="1"/>
        <end position="21"/>
    </location>
</feature>
<feature type="chain" id="PRO_5000115465" description="Outer-membrane lipoprotein carrier protein">
    <location>
        <begin position="22"/>
        <end position="202"/>
    </location>
</feature>
<reference key="1">
    <citation type="journal article" date="2006" name="J. Bacteriol.">
        <title>Complete genome sequence of Yersinia pestis strains Antiqua and Nepal516: evidence of gene reduction in an emerging pathogen.</title>
        <authorList>
            <person name="Chain P.S.G."/>
            <person name="Hu P."/>
            <person name="Malfatti S.A."/>
            <person name="Radnedge L."/>
            <person name="Larimer F."/>
            <person name="Vergez L.M."/>
            <person name="Worsham P."/>
            <person name="Chu M.C."/>
            <person name="Andersen G.L."/>
        </authorList>
    </citation>
    <scope>NUCLEOTIDE SEQUENCE [LARGE SCALE GENOMIC DNA]</scope>
    <source>
        <strain>Nepal516</strain>
    </source>
</reference>
<reference key="2">
    <citation type="submission" date="2009-04" db="EMBL/GenBank/DDBJ databases">
        <title>Yersinia pestis Nepal516A whole genome shotgun sequencing project.</title>
        <authorList>
            <person name="Plunkett G. III"/>
            <person name="Anderson B.D."/>
            <person name="Baumler D.J."/>
            <person name="Burland V."/>
            <person name="Cabot E.L."/>
            <person name="Glasner J.D."/>
            <person name="Mau B."/>
            <person name="Neeno-Eckwall E."/>
            <person name="Perna N.T."/>
            <person name="Munk A.C."/>
            <person name="Tapia R."/>
            <person name="Green L.D."/>
            <person name="Rogers Y.C."/>
            <person name="Detter J.C."/>
            <person name="Bruce D.C."/>
            <person name="Brettin T.S."/>
        </authorList>
    </citation>
    <scope>NUCLEOTIDE SEQUENCE [LARGE SCALE GENOMIC DNA]</scope>
    <source>
        <strain>Nepal516</strain>
    </source>
</reference>
<accession>Q1CGE9</accession>
<accession>C4GVU6</accession>